<gene>
    <name evidence="1" type="primary">rnp2</name>
    <name type="ordered locus">PF1378</name>
</gene>
<feature type="chain" id="PRO_0000140026" description="Ribonuclease P protein component 2">
    <location>
        <begin position="1"/>
        <end position="120"/>
    </location>
</feature>
<feature type="strand" evidence="6">
    <location>
        <begin position="16"/>
        <end position="27"/>
    </location>
</feature>
<feature type="helix" evidence="6">
    <location>
        <begin position="31"/>
        <end position="54"/>
    </location>
</feature>
<feature type="strand" evidence="6">
    <location>
        <begin position="57"/>
        <end position="62"/>
    </location>
</feature>
<feature type="turn" evidence="6">
    <location>
        <begin position="63"/>
        <end position="66"/>
    </location>
</feature>
<feature type="strand" evidence="6">
    <location>
        <begin position="67"/>
        <end position="73"/>
    </location>
</feature>
<feature type="helix" evidence="6">
    <location>
        <begin position="74"/>
        <end position="76"/>
    </location>
</feature>
<feature type="helix" evidence="6">
    <location>
        <begin position="77"/>
        <end position="85"/>
    </location>
</feature>
<feature type="strand" evidence="6">
    <location>
        <begin position="93"/>
        <end position="105"/>
    </location>
</feature>
<feature type="helix" evidence="6">
    <location>
        <begin position="106"/>
        <end position="112"/>
    </location>
</feature>
<feature type="turn" evidence="6">
    <location>
        <begin position="113"/>
        <end position="118"/>
    </location>
</feature>
<reference key="1">
    <citation type="journal article" date="1999" name="Genetics">
        <title>Divergence of the hyperthermophilic archaea Pyrococcus furiosus and P. horikoshii inferred from complete genomic sequences.</title>
        <authorList>
            <person name="Maeder D.L."/>
            <person name="Weiss R.B."/>
            <person name="Dunn D.M."/>
            <person name="Cherry J.L."/>
            <person name="Gonzalez J.M."/>
            <person name="DiRuggiero J."/>
            <person name="Robb F.T."/>
        </authorList>
    </citation>
    <scope>NUCLEOTIDE SEQUENCE [LARGE SCALE GENOMIC DNA]</scope>
    <source>
        <strain>ATCC 43587 / DSM 3638 / JCM 8422 / Vc1</strain>
    </source>
</reference>
<reference key="2">
    <citation type="journal article" date="2006" name="Proc. Natl. Acad. Sci. U.S.A.">
        <title>Functional reconstitution and characterization of Pyrococcus furiosus RNase P.</title>
        <authorList>
            <person name="Tsai H.Y."/>
            <person name="Pulukkunat D.K."/>
            <person name="Woznick W.K."/>
            <person name="Gopalan V."/>
        </authorList>
    </citation>
    <scope>FUNCTION</scope>
    <scope>CATALYTIC ACTIVITY</scope>
    <scope>BIOPHYSICOCHEMICAL PROPERTIES</scope>
    <scope>SUBUNIT</scope>
    <source>
        <strain>ATCC 43587 / DSM 3638 / JCM 8422 / Vc1</strain>
    </source>
</reference>
<reference key="3">
    <citation type="journal article" date="2011" name="J. Mol. Biol.">
        <title>Cooperative RNP assembly: complementary rescue of structural defects by protein and RNA subunits of archaeal RNase P.</title>
        <authorList>
            <person name="Chen W.Y."/>
            <person name="Xu Y."/>
            <person name="Cho I.M."/>
            <person name="Oruganti S.V."/>
            <person name="Foster M.P."/>
            <person name="Gopalan V."/>
        </authorList>
    </citation>
    <scope>FUNCTION</scope>
    <scope>SUBUNIT</scope>
</reference>
<reference key="4">
    <citation type="journal article" date="2012" name="Nucleic Acids Res.">
        <title>Fidelity of tRNA 5'-maturation: a possible basis for the functional dependence of archaeal and eukaryal RNase P on multiple protein cofactors.</title>
        <authorList>
            <person name="Chen W.Y."/>
            <person name="Singh D."/>
            <person name="Lai L.B."/>
            <person name="Stiffler M.A."/>
            <person name="Lai H.D."/>
            <person name="Foster M.P."/>
            <person name="Gopalan V."/>
        </authorList>
    </citation>
    <scope>FUNCTION</scope>
    <scope>INTERACTION WITH RNP3</scope>
    <scope>SUBUNIT</scope>
</reference>
<reference key="5">
    <citation type="journal article" date="2006" name="Proc. Natl. Acad. Sci. U.S.A.">
        <title>Structure of Pfu Pop5, an archaeal RNase P protein.</title>
        <authorList>
            <person name="Wilson R.C."/>
            <person name="Bohlen C.J."/>
            <person name="Foster M.P."/>
            <person name="Bell C.E."/>
        </authorList>
    </citation>
    <scope>X-RAY CRYSTALLOGRAPHY (3.15 ANGSTROMS)</scope>
    <scope>INTERACTION WITH RNP3</scope>
    <scope>SUBUNIT</scope>
    <source>
        <strain>ATCC 43587 / DSM 3638 / JCM 8422 / Vc1</strain>
    </source>
</reference>
<name>RNP2_PYRFU</name>
<comment type="function">
    <text evidence="1 3 4 5">Part of ribonuclease P, a protein complex that generates mature tRNA molecules by cleaving their 5'-ends. The RNA is catalytic, but its KM for pre-tRNA is 170-fold decreased in the presence of the 4 known protein subunits (Rnp1-4). The protein subunits also decrease the amount of Mg(2+) needed for activity.</text>
</comment>
<comment type="catalytic activity">
    <reaction evidence="1 3">
        <text>Endonucleolytic cleavage of RNA, removing 5'-extranucleotides from tRNA precursor.</text>
        <dbReference type="EC" id="3.1.26.5"/>
    </reaction>
</comment>
<comment type="biophysicochemical properties">
    <kinetics>
        <KM evidence="3">0.18 uM for E.coli pre-tRNA(Tyr)</KM>
        <text>kcat is 9.5 min(-1). For enzyme reconstituted with RNA and 4 known subunits (Rnp1-4).</text>
    </kinetics>
</comment>
<comment type="subunit">
    <text evidence="1 2 3 4 5">Consists of a catalytic RNA component and at least 4-5 protein subunits. Forms a subcomplex with Rnp3 which stimulates the catalytic RNA.</text>
</comment>
<comment type="subcellular location">
    <subcellularLocation>
        <location evidence="1">Cytoplasm</location>
    </subcellularLocation>
</comment>
<comment type="similarity">
    <text evidence="1">Belongs to the eukaryotic/archaeal RNase P protein component 2 family.</text>
</comment>
<proteinExistence type="evidence at protein level"/>
<protein>
    <recommendedName>
        <fullName evidence="1">Ribonuclease P protein component 2</fullName>
        <shortName evidence="1">RNase P component 2</shortName>
        <ecNumber evidence="1">3.1.26.5</ecNumber>
    </recommendedName>
    <alternativeName>
        <fullName evidence="1">Pop5</fullName>
    </alternativeName>
</protein>
<organism>
    <name type="scientific">Pyrococcus furiosus (strain ATCC 43587 / DSM 3638 / JCM 8422 / Vc1)</name>
    <dbReference type="NCBI Taxonomy" id="186497"/>
    <lineage>
        <taxon>Archaea</taxon>
        <taxon>Methanobacteriati</taxon>
        <taxon>Methanobacteriota</taxon>
        <taxon>Thermococci</taxon>
        <taxon>Thermococcales</taxon>
        <taxon>Thermococcaceae</taxon>
        <taxon>Pyrococcus</taxon>
    </lineage>
</organism>
<dbReference type="EC" id="3.1.26.5" evidence="1"/>
<dbReference type="EMBL" id="AE009950">
    <property type="protein sequence ID" value="AAL81502.1"/>
    <property type="molecule type" value="Genomic_DNA"/>
</dbReference>
<dbReference type="RefSeq" id="WP_011012525.1">
    <property type="nucleotide sequence ID" value="NZ_CP023154.1"/>
</dbReference>
<dbReference type="PDB" id="2AV5">
    <property type="method" value="X-ray"/>
    <property type="resolution" value="3.15 A"/>
    <property type="chains" value="A/B/C/D/E=1-120"/>
</dbReference>
<dbReference type="PDBsum" id="2AV5"/>
<dbReference type="BMRB" id="Q8U151"/>
<dbReference type="SMR" id="Q8U151"/>
<dbReference type="IntAct" id="Q8U151">
    <property type="interactions" value="1"/>
</dbReference>
<dbReference type="STRING" id="186497.PF1378"/>
<dbReference type="PaxDb" id="186497-PF1378"/>
<dbReference type="KEGG" id="pfu:PF1378"/>
<dbReference type="PATRIC" id="fig|186497.12.peg.1441"/>
<dbReference type="eggNOG" id="arCOG01365">
    <property type="taxonomic scope" value="Archaea"/>
</dbReference>
<dbReference type="HOGENOM" id="CLU_137733_1_0_2"/>
<dbReference type="OrthoDB" id="19261at2157"/>
<dbReference type="PhylomeDB" id="Q8U151"/>
<dbReference type="BRENDA" id="3.1.26.5">
    <property type="organism ID" value="5243"/>
</dbReference>
<dbReference type="EvolutionaryTrace" id="Q8U151"/>
<dbReference type="Proteomes" id="UP000001013">
    <property type="component" value="Chromosome"/>
</dbReference>
<dbReference type="GO" id="GO:0005737">
    <property type="term" value="C:cytoplasm"/>
    <property type="evidence" value="ECO:0007669"/>
    <property type="project" value="UniProtKB-SubCell"/>
</dbReference>
<dbReference type="GO" id="GO:0030677">
    <property type="term" value="C:ribonuclease P complex"/>
    <property type="evidence" value="ECO:0007669"/>
    <property type="project" value="UniProtKB-UniRule"/>
</dbReference>
<dbReference type="GO" id="GO:0004526">
    <property type="term" value="F:ribonuclease P activity"/>
    <property type="evidence" value="ECO:0007669"/>
    <property type="project" value="UniProtKB-UniRule"/>
</dbReference>
<dbReference type="GO" id="GO:0001682">
    <property type="term" value="P:tRNA 5'-leader removal"/>
    <property type="evidence" value="ECO:0007669"/>
    <property type="project" value="UniProtKB-UniRule"/>
</dbReference>
<dbReference type="Gene3D" id="3.30.70.3250">
    <property type="entry name" value="Ribonuclease P, Pop5 subunit"/>
    <property type="match status" value="1"/>
</dbReference>
<dbReference type="HAMAP" id="MF_00755">
    <property type="entry name" value="RNase_P_2"/>
    <property type="match status" value="1"/>
</dbReference>
<dbReference type="InterPro" id="IPR002759">
    <property type="entry name" value="Pop5/Rpp14/Rnp2-like"/>
</dbReference>
<dbReference type="InterPro" id="IPR038085">
    <property type="entry name" value="Rnp2-like_sf"/>
</dbReference>
<dbReference type="InterPro" id="IPR016434">
    <property type="entry name" value="Rnp2_archaea"/>
</dbReference>
<dbReference type="NCBIfam" id="NF002986">
    <property type="entry name" value="PRK03717.1"/>
    <property type="match status" value="1"/>
</dbReference>
<dbReference type="PANTHER" id="PTHR15441">
    <property type="entry name" value="RIBONUCLEASE P PROTEIN SUBUNIT P14"/>
    <property type="match status" value="1"/>
</dbReference>
<dbReference type="PANTHER" id="PTHR15441:SF2">
    <property type="entry name" value="RIBONUCLEASE P_MRP PROTEIN SUBUNIT POP5"/>
    <property type="match status" value="1"/>
</dbReference>
<dbReference type="Pfam" id="PF01900">
    <property type="entry name" value="RNase_P_Rpp14"/>
    <property type="match status" value="1"/>
</dbReference>
<dbReference type="PIRSF" id="PIRSF004952">
    <property type="entry name" value="RNase_P_2"/>
    <property type="match status" value="1"/>
</dbReference>
<dbReference type="SUPFAM" id="SSF160350">
    <property type="entry name" value="Rnp2-like"/>
    <property type="match status" value="1"/>
</dbReference>
<keyword id="KW-0002">3D-structure</keyword>
<keyword id="KW-0963">Cytoplasm</keyword>
<keyword id="KW-0255">Endonuclease</keyword>
<keyword id="KW-0378">Hydrolase</keyword>
<keyword id="KW-0540">Nuclease</keyword>
<keyword id="KW-1185">Reference proteome</keyword>
<keyword id="KW-0819">tRNA processing</keyword>
<accession>Q8U151</accession>
<evidence type="ECO:0000255" key="1">
    <source>
        <dbReference type="HAMAP-Rule" id="MF_00755"/>
    </source>
</evidence>
<evidence type="ECO:0000269" key="2">
    <source>
    </source>
</evidence>
<evidence type="ECO:0000269" key="3">
    <source>
    </source>
</evidence>
<evidence type="ECO:0000269" key="4">
    <source>
    </source>
</evidence>
<evidence type="ECO:0000269" key="5">
    <source>
    </source>
</evidence>
<evidence type="ECO:0007829" key="6">
    <source>
        <dbReference type="PDB" id="2AV5"/>
    </source>
</evidence>
<sequence length="120" mass="13839">MSERPKTLPPTLRDKKRYIAFKVISENQFNKDEIKEAIWNACLRTLGELGTAKAKPWLIKFDETTQTGIIRCDRNHVYDVIFSLTLVSDINGNKAIIKVLGVSGTIKRLKRKFLSQFGWR</sequence>